<dbReference type="EC" id="6.3.4.4" evidence="1"/>
<dbReference type="EMBL" id="AP006841">
    <property type="protein sequence ID" value="BAD50164.1"/>
    <property type="molecule type" value="Genomic_DNA"/>
</dbReference>
<dbReference type="RefSeq" id="WP_005789791.1">
    <property type="nucleotide sequence ID" value="NZ_UYXF01000038.1"/>
</dbReference>
<dbReference type="RefSeq" id="YP_100698.1">
    <property type="nucleotide sequence ID" value="NC_006347.1"/>
</dbReference>
<dbReference type="SMR" id="Q64QR7"/>
<dbReference type="STRING" id="295405.BF3421"/>
<dbReference type="KEGG" id="bfr:BF3421"/>
<dbReference type="PATRIC" id="fig|295405.11.peg.3288"/>
<dbReference type="HOGENOM" id="CLU_029848_0_0_10"/>
<dbReference type="OrthoDB" id="9807553at2"/>
<dbReference type="UniPathway" id="UPA00075">
    <property type="reaction ID" value="UER00335"/>
</dbReference>
<dbReference type="Proteomes" id="UP000002197">
    <property type="component" value="Chromosome"/>
</dbReference>
<dbReference type="GO" id="GO:0005737">
    <property type="term" value="C:cytoplasm"/>
    <property type="evidence" value="ECO:0007669"/>
    <property type="project" value="UniProtKB-SubCell"/>
</dbReference>
<dbReference type="GO" id="GO:0004019">
    <property type="term" value="F:adenylosuccinate synthase activity"/>
    <property type="evidence" value="ECO:0007669"/>
    <property type="project" value="UniProtKB-UniRule"/>
</dbReference>
<dbReference type="GO" id="GO:0005525">
    <property type="term" value="F:GTP binding"/>
    <property type="evidence" value="ECO:0007669"/>
    <property type="project" value="UniProtKB-UniRule"/>
</dbReference>
<dbReference type="GO" id="GO:0000287">
    <property type="term" value="F:magnesium ion binding"/>
    <property type="evidence" value="ECO:0007669"/>
    <property type="project" value="UniProtKB-UniRule"/>
</dbReference>
<dbReference type="GO" id="GO:0044208">
    <property type="term" value="P:'de novo' AMP biosynthetic process"/>
    <property type="evidence" value="ECO:0007669"/>
    <property type="project" value="UniProtKB-UniRule"/>
</dbReference>
<dbReference type="GO" id="GO:0046040">
    <property type="term" value="P:IMP metabolic process"/>
    <property type="evidence" value="ECO:0007669"/>
    <property type="project" value="TreeGrafter"/>
</dbReference>
<dbReference type="CDD" id="cd03108">
    <property type="entry name" value="AdSS"/>
    <property type="match status" value="1"/>
</dbReference>
<dbReference type="FunFam" id="1.10.300.10:FF:000003">
    <property type="entry name" value="Adenylosuccinate synthetase"/>
    <property type="match status" value="1"/>
</dbReference>
<dbReference type="FunFam" id="3.90.170.10:FF:000001">
    <property type="entry name" value="Adenylosuccinate synthetase"/>
    <property type="match status" value="1"/>
</dbReference>
<dbReference type="Gene3D" id="3.40.440.10">
    <property type="entry name" value="Adenylosuccinate Synthetase, subunit A, domain 1"/>
    <property type="match status" value="1"/>
</dbReference>
<dbReference type="Gene3D" id="1.10.300.10">
    <property type="entry name" value="Adenylosuccinate Synthetase, subunit A, domain 2"/>
    <property type="match status" value="1"/>
</dbReference>
<dbReference type="Gene3D" id="3.90.170.10">
    <property type="entry name" value="Adenylosuccinate Synthetase, subunit A, domain 3"/>
    <property type="match status" value="1"/>
</dbReference>
<dbReference type="HAMAP" id="MF_00011">
    <property type="entry name" value="Adenylosucc_synth"/>
    <property type="match status" value="1"/>
</dbReference>
<dbReference type="InterPro" id="IPR018220">
    <property type="entry name" value="Adenylosuccin_syn_GTP-bd"/>
</dbReference>
<dbReference type="InterPro" id="IPR033128">
    <property type="entry name" value="Adenylosuccin_syn_Lys_AS"/>
</dbReference>
<dbReference type="InterPro" id="IPR042109">
    <property type="entry name" value="Adenylosuccinate_synth_dom1"/>
</dbReference>
<dbReference type="InterPro" id="IPR042110">
    <property type="entry name" value="Adenylosuccinate_synth_dom2"/>
</dbReference>
<dbReference type="InterPro" id="IPR042111">
    <property type="entry name" value="Adenylosuccinate_synth_dom3"/>
</dbReference>
<dbReference type="InterPro" id="IPR001114">
    <property type="entry name" value="Adenylosuccinate_synthetase"/>
</dbReference>
<dbReference type="InterPro" id="IPR027417">
    <property type="entry name" value="P-loop_NTPase"/>
</dbReference>
<dbReference type="NCBIfam" id="NF002223">
    <property type="entry name" value="PRK01117.1"/>
    <property type="match status" value="1"/>
</dbReference>
<dbReference type="NCBIfam" id="TIGR00184">
    <property type="entry name" value="purA"/>
    <property type="match status" value="1"/>
</dbReference>
<dbReference type="PANTHER" id="PTHR11846">
    <property type="entry name" value="ADENYLOSUCCINATE SYNTHETASE"/>
    <property type="match status" value="1"/>
</dbReference>
<dbReference type="PANTHER" id="PTHR11846:SF0">
    <property type="entry name" value="ADENYLOSUCCINATE SYNTHETASE"/>
    <property type="match status" value="1"/>
</dbReference>
<dbReference type="Pfam" id="PF00709">
    <property type="entry name" value="Adenylsucc_synt"/>
    <property type="match status" value="1"/>
</dbReference>
<dbReference type="SMART" id="SM00788">
    <property type="entry name" value="Adenylsucc_synt"/>
    <property type="match status" value="1"/>
</dbReference>
<dbReference type="SUPFAM" id="SSF52540">
    <property type="entry name" value="P-loop containing nucleoside triphosphate hydrolases"/>
    <property type="match status" value="1"/>
</dbReference>
<dbReference type="PROSITE" id="PS01266">
    <property type="entry name" value="ADENYLOSUCCIN_SYN_1"/>
    <property type="match status" value="1"/>
</dbReference>
<dbReference type="PROSITE" id="PS00513">
    <property type="entry name" value="ADENYLOSUCCIN_SYN_2"/>
    <property type="match status" value="1"/>
</dbReference>
<organism>
    <name type="scientific">Bacteroides fragilis (strain YCH46)</name>
    <dbReference type="NCBI Taxonomy" id="295405"/>
    <lineage>
        <taxon>Bacteria</taxon>
        <taxon>Pseudomonadati</taxon>
        <taxon>Bacteroidota</taxon>
        <taxon>Bacteroidia</taxon>
        <taxon>Bacteroidales</taxon>
        <taxon>Bacteroidaceae</taxon>
        <taxon>Bacteroides</taxon>
    </lineage>
</organism>
<reference key="1">
    <citation type="journal article" date="2004" name="Proc. Natl. Acad. Sci. U.S.A.">
        <title>Genomic analysis of Bacteroides fragilis reveals extensive DNA inversions regulating cell surface adaptation.</title>
        <authorList>
            <person name="Kuwahara T."/>
            <person name="Yamashita A."/>
            <person name="Hirakawa H."/>
            <person name="Nakayama H."/>
            <person name="Toh H."/>
            <person name="Okada N."/>
            <person name="Kuhara S."/>
            <person name="Hattori M."/>
            <person name="Hayashi T."/>
            <person name="Ohnishi Y."/>
        </authorList>
    </citation>
    <scope>NUCLEOTIDE SEQUENCE [LARGE SCALE GENOMIC DNA]</scope>
    <source>
        <strain>YCH46</strain>
    </source>
</reference>
<proteinExistence type="inferred from homology"/>
<comment type="function">
    <text evidence="1">Plays an important role in the de novo pathway of purine nucleotide biosynthesis. Catalyzes the first committed step in the biosynthesis of AMP from IMP.</text>
</comment>
<comment type="catalytic activity">
    <reaction evidence="1">
        <text>IMP + L-aspartate + GTP = N(6)-(1,2-dicarboxyethyl)-AMP + GDP + phosphate + 2 H(+)</text>
        <dbReference type="Rhea" id="RHEA:15753"/>
        <dbReference type="ChEBI" id="CHEBI:15378"/>
        <dbReference type="ChEBI" id="CHEBI:29991"/>
        <dbReference type="ChEBI" id="CHEBI:37565"/>
        <dbReference type="ChEBI" id="CHEBI:43474"/>
        <dbReference type="ChEBI" id="CHEBI:57567"/>
        <dbReference type="ChEBI" id="CHEBI:58053"/>
        <dbReference type="ChEBI" id="CHEBI:58189"/>
        <dbReference type="EC" id="6.3.4.4"/>
    </reaction>
</comment>
<comment type="cofactor">
    <cofactor evidence="1">
        <name>Mg(2+)</name>
        <dbReference type="ChEBI" id="CHEBI:18420"/>
    </cofactor>
    <text evidence="1">Binds 1 Mg(2+) ion per subunit.</text>
</comment>
<comment type="pathway">
    <text evidence="1">Purine metabolism; AMP biosynthesis via de novo pathway; AMP from IMP: step 1/2.</text>
</comment>
<comment type="subunit">
    <text evidence="1">Homodimer.</text>
</comment>
<comment type="subcellular location">
    <subcellularLocation>
        <location evidence="1">Cytoplasm</location>
    </subcellularLocation>
</comment>
<comment type="similarity">
    <text evidence="1">Belongs to the adenylosuccinate synthetase family.</text>
</comment>
<keyword id="KW-0963">Cytoplasm</keyword>
<keyword id="KW-0342">GTP-binding</keyword>
<keyword id="KW-0436">Ligase</keyword>
<keyword id="KW-0460">Magnesium</keyword>
<keyword id="KW-0479">Metal-binding</keyword>
<keyword id="KW-0547">Nucleotide-binding</keyword>
<keyword id="KW-0658">Purine biosynthesis</keyword>
<sequence>MKVDVLLGLQWGDEGKGKVVDVLTPKYDVVARFQGGPNAGHTLEFEGQKYVLRSIPSGIFQGDKVNIIGNGVVLDPALFKAEAEALEASGHNLKERLHISKKAHLILPTHRILDAAYEAAKGDAKVGTTGKGIGPTYTDKVSRNGVRVGDILHNFEQKYAAAKARHEQILKGLNYEYDLTELEKAWFEGIEYLKQFQLVDSEHEINGLLDNGKSILCEGAQGTMLDIDFGSYPFVTSSNTVCAGACTGLGVAPNKIGDVYGIFKAYCTRVGSGPFPTELFDKTGDQICTLGHEFGSVTGRKRRCGWVDLVALKYSIMVNGVTKLIMMKSDVLDTFETIKACVAYKMNGEEIDYFPYDITDEVEPIYVELPGWQTDMTKMQSEDEFPEEFNAYLSFLEEQLGVQIKIVSVGPDREQTIIRYTEE</sequence>
<feature type="chain" id="PRO_0000224255" description="Adenylosuccinate synthetase">
    <location>
        <begin position="1"/>
        <end position="423"/>
    </location>
</feature>
<feature type="active site" description="Proton acceptor" evidence="1">
    <location>
        <position position="13"/>
    </location>
</feature>
<feature type="active site" description="Proton donor" evidence="1">
    <location>
        <position position="41"/>
    </location>
</feature>
<feature type="binding site" evidence="1">
    <location>
        <begin position="12"/>
        <end position="18"/>
    </location>
    <ligand>
        <name>GTP</name>
        <dbReference type="ChEBI" id="CHEBI:37565"/>
    </ligand>
</feature>
<feature type="binding site" description="in other chain" evidence="1">
    <location>
        <begin position="13"/>
        <end position="16"/>
    </location>
    <ligand>
        <name>IMP</name>
        <dbReference type="ChEBI" id="CHEBI:58053"/>
        <note>ligand shared between dimeric partners</note>
    </ligand>
</feature>
<feature type="binding site" evidence="1">
    <location>
        <position position="13"/>
    </location>
    <ligand>
        <name>Mg(2+)</name>
        <dbReference type="ChEBI" id="CHEBI:18420"/>
    </ligand>
</feature>
<feature type="binding site" description="in other chain" evidence="1">
    <location>
        <begin position="38"/>
        <end position="41"/>
    </location>
    <ligand>
        <name>IMP</name>
        <dbReference type="ChEBI" id="CHEBI:58053"/>
        <note>ligand shared between dimeric partners</note>
    </ligand>
</feature>
<feature type="binding site" evidence="1">
    <location>
        <begin position="40"/>
        <end position="42"/>
    </location>
    <ligand>
        <name>GTP</name>
        <dbReference type="ChEBI" id="CHEBI:37565"/>
    </ligand>
</feature>
<feature type="binding site" evidence="1">
    <location>
        <position position="40"/>
    </location>
    <ligand>
        <name>Mg(2+)</name>
        <dbReference type="ChEBI" id="CHEBI:18420"/>
    </ligand>
</feature>
<feature type="binding site" description="in other chain" evidence="1">
    <location>
        <position position="129"/>
    </location>
    <ligand>
        <name>IMP</name>
        <dbReference type="ChEBI" id="CHEBI:58053"/>
        <note>ligand shared between dimeric partners</note>
    </ligand>
</feature>
<feature type="binding site" evidence="1">
    <location>
        <position position="143"/>
    </location>
    <ligand>
        <name>IMP</name>
        <dbReference type="ChEBI" id="CHEBI:58053"/>
        <note>ligand shared between dimeric partners</note>
    </ligand>
</feature>
<feature type="binding site" description="in other chain" evidence="1">
    <location>
        <position position="221"/>
    </location>
    <ligand>
        <name>IMP</name>
        <dbReference type="ChEBI" id="CHEBI:58053"/>
        <note>ligand shared between dimeric partners</note>
    </ligand>
</feature>
<feature type="binding site" description="in other chain" evidence="1">
    <location>
        <position position="236"/>
    </location>
    <ligand>
        <name>IMP</name>
        <dbReference type="ChEBI" id="CHEBI:58053"/>
        <note>ligand shared between dimeric partners</note>
    </ligand>
</feature>
<feature type="binding site" evidence="1">
    <location>
        <begin position="296"/>
        <end position="302"/>
    </location>
    <ligand>
        <name>substrate</name>
    </ligand>
</feature>
<feature type="binding site" description="in other chain" evidence="1">
    <location>
        <position position="300"/>
    </location>
    <ligand>
        <name>IMP</name>
        <dbReference type="ChEBI" id="CHEBI:58053"/>
        <note>ligand shared between dimeric partners</note>
    </ligand>
</feature>
<feature type="binding site" evidence="1">
    <location>
        <position position="302"/>
    </location>
    <ligand>
        <name>GTP</name>
        <dbReference type="ChEBI" id="CHEBI:37565"/>
    </ligand>
</feature>
<feature type="binding site" evidence="1">
    <location>
        <begin position="328"/>
        <end position="330"/>
    </location>
    <ligand>
        <name>GTP</name>
        <dbReference type="ChEBI" id="CHEBI:37565"/>
    </ligand>
</feature>
<feature type="binding site" evidence="1">
    <location>
        <begin position="408"/>
        <end position="410"/>
    </location>
    <ligand>
        <name>GTP</name>
        <dbReference type="ChEBI" id="CHEBI:37565"/>
    </ligand>
</feature>
<protein>
    <recommendedName>
        <fullName evidence="1">Adenylosuccinate synthetase</fullName>
        <shortName evidence="1">AMPSase</shortName>
        <shortName evidence="1">AdSS</shortName>
        <ecNumber evidence="1">6.3.4.4</ecNumber>
    </recommendedName>
    <alternativeName>
        <fullName evidence="1">IMP--aspartate ligase</fullName>
    </alternativeName>
</protein>
<evidence type="ECO:0000255" key="1">
    <source>
        <dbReference type="HAMAP-Rule" id="MF_00011"/>
    </source>
</evidence>
<accession>Q64QR7</accession>
<name>PURA_BACFR</name>
<gene>
    <name evidence="1" type="primary">purA</name>
    <name type="ordered locus">BF3421</name>
</gene>